<evidence type="ECO:0000255" key="1"/>
<evidence type="ECO:0000255" key="2">
    <source>
        <dbReference type="PROSITE-ProRule" id="PRU00521"/>
    </source>
</evidence>
<evidence type="ECO:0000269" key="3">
    <source>
    </source>
</evidence>
<evidence type="ECO:0000269" key="4">
    <source>
    </source>
</evidence>
<evidence type="ECO:0000269" key="5">
    <source>
    </source>
</evidence>
<evidence type="ECO:0000269" key="6">
    <source>
    </source>
</evidence>
<evidence type="ECO:0000269" key="7">
    <source>
    </source>
</evidence>
<evidence type="ECO:0000303" key="8">
    <source>
    </source>
</evidence>
<evidence type="ECO:0000305" key="9">
    <source>
    </source>
</evidence>
<evidence type="ECO:0007829" key="10">
    <source>
        <dbReference type="PDB" id="8KFX"/>
    </source>
</evidence>
<evidence type="ECO:0007829" key="11">
    <source>
        <dbReference type="PDB" id="8TLM"/>
    </source>
</evidence>
<evidence type="ECO:0007829" key="12">
    <source>
        <dbReference type="PDB" id="8U1U"/>
    </source>
</evidence>
<reference key="1">
    <citation type="journal article" date="1996" name="Biochem. Biophys. Res. Commun.">
        <title>Molecular cloning and RNA expression of two new human chemokine receptor-like genes.</title>
        <authorList>
            <person name="Zaballos A."/>
            <person name="Varona R."/>
            <person name="Gutierrez J."/>
            <person name="Lind P."/>
            <person name="Marquez G."/>
        </authorList>
    </citation>
    <scope>NUCLEOTIDE SEQUENCE [GENOMIC DNA]</scope>
</reference>
<reference key="2">
    <citation type="journal article" date="1996" name="Eur. J. Immunol.">
        <title>Molecular cloning and chromosomal mapping of a novel human gene, ChemR1, expressed in T lymphocytes and polymorphonuclear cells and encoding a putative chemokine receptor.</title>
        <authorList>
            <person name="Samson M."/>
            <person name="Stordeur P."/>
            <person name="Labbe O."/>
            <person name="Soularue P."/>
            <person name="Vassart G."/>
            <person name="Parmentier M."/>
        </authorList>
    </citation>
    <scope>NUCLEOTIDE SEQUENCE [GENOMIC DNA]</scope>
</reference>
<reference key="3">
    <citation type="journal article" date="1997" name="J. Exp. Med.">
        <title>Identification of CCR8: a human monocyte and thymus receptor for the CC chemokine I-309.</title>
        <authorList>
            <person name="Tiffany H.L."/>
            <person name="Lautens L.L."/>
            <person name="Gao J.-L."/>
            <person name="Pease J."/>
            <person name="Locati M."/>
            <person name="Combadiere C."/>
            <person name="Modi W."/>
            <person name="Bonner T.I."/>
            <person name="Murphy P.M."/>
        </authorList>
    </citation>
    <scope>NUCLEOTIDE SEQUENCE [GENOMIC DNA / MRNA] (ISOFORM 1)</scope>
    <scope>FUNCTION AS A RECEPTOR FOR CCL1</scope>
    <source>
        <tissue>Thymus</tissue>
    </source>
</reference>
<reference key="4">
    <citation type="journal article" date="1996" name="J. Immunol.">
        <title>Molecular cloning of TER1, a chemokine receptor-like gene expressed by lymphoid tissues.</title>
        <authorList>
            <person name="Napolitano M."/>
            <person name="Zingoni A."/>
            <person name="Bernardini G."/>
            <person name="Spinetti G."/>
            <person name="Nista A."/>
            <person name="Storlazzi C.T."/>
            <person name="Rocchi M."/>
            <person name="Santoni A."/>
        </authorList>
    </citation>
    <scope>NUCLEOTIDE SEQUENCE [GENOMIC DNA]</scope>
</reference>
<reference key="5">
    <citation type="submission" date="1997-11" db="EMBL/GenBank/DDBJ databases">
        <title>Molecular cloning of a human novel C-C chemokine receptor.</title>
        <authorList>
            <person name="Nakajima T."/>
            <person name="Yoshida R."/>
            <person name="Harada S."/>
        </authorList>
    </citation>
    <scope>NUCLEOTIDE SEQUENCE [MRNA] (ISOFORM 1)</scope>
</reference>
<reference key="6">
    <citation type="journal article" date="2003" name="J. Biol. Chem.">
        <title>Genomic organization and evolution of the CX3CR1/CCR8 chemokine receptor locus.</title>
        <authorList>
            <person name="DeVries M.E."/>
            <person name="Cao H."/>
            <person name="Wang J."/>
            <person name="Xu L."/>
            <person name="Kelvin A.A."/>
            <person name="Ran L."/>
            <person name="Chau L.A."/>
            <person name="Madrenas J."/>
            <person name="Hegele R.A."/>
            <person name="Kelvin D.J."/>
        </authorList>
    </citation>
    <scope>NUCLEOTIDE SEQUENCE [GENOMIC DNA]</scope>
    <scope>VARIANT GLY-27</scope>
</reference>
<reference key="7">
    <citation type="journal article" date="2004" name="Nat. Genet.">
        <title>Complete sequencing and characterization of 21,243 full-length human cDNAs.</title>
        <authorList>
            <person name="Ota T."/>
            <person name="Suzuki Y."/>
            <person name="Nishikawa T."/>
            <person name="Otsuki T."/>
            <person name="Sugiyama T."/>
            <person name="Irie R."/>
            <person name="Wakamatsu A."/>
            <person name="Hayashi K."/>
            <person name="Sato H."/>
            <person name="Nagai K."/>
            <person name="Kimura K."/>
            <person name="Makita H."/>
            <person name="Sekine M."/>
            <person name="Obayashi M."/>
            <person name="Nishi T."/>
            <person name="Shibahara T."/>
            <person name="Tanaka T."/>
            <person name="Ishii S."/>
            <person name="Yamamoto J."/>
            <person name="Saito K."/>
            <person name="Kawai Y."/>
            <person name="Isono Y."/>
            <person name="Nakamura Y."/>
            <person name="Nagahari K."/>
            <person name="Murakami K."/>
            <person name="Yasuda T."/>
            <person name="Iwayanagi T."/>
            <person name="Wagatsuma M."/>
            <person name="Shiratori A."/>
            <person name="Sudo H."/>
            <person name="Hosoiri T."/>
            <person name="Kaku Y."/>
            <person name="Kodaira H."/>
            <person name="Kondo H."/>
            <person name="Sugawara M."/>
            <person name="Takahashi M."/>
            <person name="Kanda K."/>
            <person name="Yokoi T."/>
            <person name="Furuya T."/>
            <person name="Kikkawa E."/>
            <person name="Omura Y."/>
            <person name="Abe K."/>
            <person name="Kamihara K."/>
            <person name="Katsuta N."/>
            <person name="Sato K."/>
            <person name="Tanikawa M."/>
            <person name="Yamazaki M."/>
            <person name="Ninomiya K."/>
            <person name="Ishibashi T."/>
            <person name="Yamashita H."/>
            <person name="Murakawa K."/>
            <person name="Fujimori K."/>
            <person name="Tanai H."/>
            <person name="Kimata M."/>
            <person name="Watanabe M."/>
            <person name="Hiraoka S."/>
            <person name="Chiba Y."/>
            <person name="Ishida S."/>
            <person name="Ono Y."/>
            <person name="Takiguchi S."/>
            <person name="Watanabe S."/>
            <person name="Yosida M."/>
            <person name="Hotuta T."/>
            <person name="Kusano J."/>
            <person name="Kanehori K."/>
            <person name="Takahashi-Fujii A."/>
            <person name="Hara H."/>
            <person name="Tanase T.-O."/>
            <person name="Nomura Y."/>
            <person name="Togiya S."/>
            <person name="Komai F."/>
            <person name="Hara R."/>
            <person name="Takeuchi K."/>
            <person name="Arita M."/>
            <person name="Imose N."/>
            <person name="Musashino K."/>
            <person name="Yuuki H."/>
            <person name="Oshima A."/>
            <person name="Sasaki N."/>
            <person name="Aotsuka S."/>
            <person name="Yoshikawa Y."/>
            <person name="Matsunawa H."/>
            <person name="Ichihara T."/>
            <person name="Shiohata N."/>
            <person name="Sano S."/>
            <person name="Moriya S."/>
            <person name="Momiyama H."/>
            <person name="Satoh N."/>
            <person name="Takami S."/>
            <person name="Terashima Y."/>
            <person name="Suzuki O."/>
            <person name="Nakagawa S."/>
            <person name="Senoh A."/>
            <person name="Mizoguchi H."/>
            <person name="Goto Y."/>
            <person name="Shimizu F."/>
            <person name="Wakebe H."/>
            <person name="Hishigaki H."/>
            <person name="Watanabe T."/>
            <person name="Sugiyama A."/>
            <person name="Takemoto M."/>
            <person name="Kawakami B."/>
            <person name="Yamazaki M."/>
            <person name="Watanabe K."/>
            <person name="Kumagai A."/>
            <person name="Itakura S."/>
            <person name="Fukuzumi Y."/>
            <person name="Fujimori Y."/>
            <person name="Komiyama M."/>
            <person name="Tashiro H."/>
            <person name="Tanigami A."/>
            <person name="Fujiwara T."/>
            <person name="Ono T."/>
            <person name="Yamada K."/>
            <person name="Fujii Y."/>
            <person name="Ozaki K."/>
            <person name="Hirao M."/>
            <person name="Ohmori Y."/>
            <person name="Kawabata A."/>
            <person name="Hikiji T."/>
            <person name="Kobatake N."/>
            <person name="Inagaki H."/>
            <person name="Ikema Y."/>
            <person name="Okamoto S."/>
            <person name="Okitani R."/>
            <person name="Kawakami T."/>
            <person name="Noguchi S."/>
            <person name="Itoh T."/>
            <person name="Shigeta K."/>
            <person name="Senba T."/>
            <person name="Matsumura K."/>
            <person name="Nakajima Y."/>
            <person name="Mizuno T."/>
            <person name="Morinaga M."/>
            <person name="Sasaki M."/>
            <person name="Togashi T."/>
            <person name="Oyama M."/>
            <person name="Hata H."/>
            <person name="Watanabe M."/>
            <person name="Komatsu T."/>
            <person name="Mizushima-Sugano J."/>
            <person name="Satoh T."/>
            <person name="Shirai Y."/>
            <person name="Takahashi Y."/>
            <person name="Nakagawa K."/>
            <person name="Okumura K."/>
            <person name="Nagase T."/>
            <person name="Nomura N."/>
            <person name="Kikuchi H."/>
            <person name="Masuho Y."/>
            <person name="Yamashita R."/>
            <person name="Nakai K."/>
            <person name="Yada T."/>
            <person name="Nakamura Y."/>
            <person name="Ohara O."/>
            <person name="Isogai T."/>
            <person name="Sugano S."/>
        </authorList>
    </citation>
    <scope>NUCLEOTIDE SEQUENCE [LARGE SCALE MRNA] (ISOFORM 1)</scope>
</reference>
<reference key="8">
    <citation type="journal article" date="2006" name="Nature">
        <title>The DNA sequence, annotation and analysis of human chromosome 3.</title>
        <authorList>
            <person name="Muzny D.M."/>
            <person name="Scherer S.E."/>
            <person name="Kaul R."/>
            <person name="Wang J."/>
            <person name="Yu J."/>
            <person name="Sudbrak R."/>
            <person name="Buhay C.J."/>
            <person name="Chen R."/>
            <person name="Cree A."/>
            <person name="Ding Y."/>
            <person name="Dugan-Rocha S."/>
            <person name="Gill R."/>
            <person name="Gunaratne P."/>
            <person name="Harris R.A."/>
            <person name="Hawes A.C."/>
            <person name="Hernandez J."/>
            <person name="Hodgson A.V."/>
            <person name="Hume J."/>
            <person name="Jackson A."/>
            <person name="Khan Z.M."/>
            <person name="Kovar-Smith C."/>
            <person name="Lewis L.R."/>
            <person name="Lozado R.J."/>
            <person name="Metzker M.L."/>
            <person name="Milosavljevic A."/>
            <person name="Miner G.R."/>
            <person name="Morgan M.B."/>
            <person name="Nazareth L.V."/>
            <person name="Scott G."/>
            <person name="Sodergren E."/>
            <person name="Song X.-Z."/>
            <person name="Steffen D."/>
            <person name="Wei S."/>
            <person name="Wheeler D.A."/>
            <person name="Wright M.W."/>
            <person name="Worley K.C."/>
            <person name="Yuan Y."/>
            <person name="Zhang Z."/>
            <person name="Adams C.Q."/>
            <person name="Ansari-Lari M.A."/>
            <person name="Ayele M."/>
            <person name="Brown M.J."/>
            <person name="Chen G."/>
            <person name="Chen Z."/>
            <person name="Clendenning J."/>
            <person name="Clerc-Blankenburg K.P."/>
            <person name="Chen R."/>
            <person name="Chen Z."/>
            <person name="Davis C."/>
            <person name="Delgado O."/>
            <person name="Dinh H.H."/>
            <person name="Dong W."/>
            <person name="Draper H."/>
            <person name="Ernst S."/>
            <person name="Fu G."/>
            <person name="Gonzalez-Garay M.L."/>
            <person name="Garcia D.K."/>
            <person name="Gillett W."/>
            <person name="Gu J."/>
            <person name="Hao B."/>
            <person name="Haugen E."/>
            <person name="Havlak P."/>
            <person name="He X."/>
            <person name="Hennig S."/>
            <person name="Hu S."/>
            <person name="Huang W."/>
            <person name="Jackson L.R."/>
            <person name="Jacob L.S."/>
            <person name="Kelly S.H."/>
            <person name="Kube M."/>
            <person name="Levy R."/>
            <person name="Li Z."/>
            <person name="Liu B."/>
            <person name="Liu J."/>
            <person name="Liu W."/>
            <person name="Lu J."/>
            <person name="Maheshwari M."/>
            <person name="Nguyen B.-V."/>
            <person name="Okwuonu G.O."/>
            <person name="Palmeiri A."/>
            <person name="Pasternak S."/>
            <person name="Perez L.M."/>
            <person name="Phelps K.A."/>
            <person name="Plopper F.J."/>
            <person name="Qiang B."/>
            <person name="Raymond C."/>
            <person name="Rodriguez R."/>
            <person name="Saenphimmachak C."/>
            <person name="Santibanez J."/>
            <person name="Shen H."/>
            <person name="Shen Y."/>
            <person name="Subramanian S."/>
            <person name="Tabor P.E."/>
            <person name="Verduzco D."/>
            <person name="Waldron L."/>
            <person name="Wang J."/>
            <person name="Wang J."/>
            <person name="Wang Q."/>
            <person name="Williams G.A."/>
            <person name="Wong G.K.-S."/>
            <person name="Yao Z."/>
            <person name="Zhang J."/>
            <person name="Zhang X."/>
            <person name="Zhao G."/>
            <person name="Zhou J."/>
            <person name="Zhou Y."/>
            <person name="Nelson D."/>
            <person name="Lehrach H."/>
            <person name="Reinhardt R."/>
            <person name="Naylor S.L."/>
            <person name="Yang H."/>
            <person name="Olson M."/>
            <person name="Weinstock G."/>
            <person name="Gibbs R.A."/>
        </authorList>
    </citation>
    <scope>NUCLEOTIDE SEQUENCE [LARGE SCALE GENOMIC DNA]</scope>
</reference>
<reference key="9">
    <citation type="submission" date="2005-07" db="EMBL/GenBank/DDBJ databases">
        <authorList>
            <person name="Mural R.J."/>
            <person name="Istrail S."/>
            <person name="Sutton G.G."/>
            <person name="Florea L."/>
            <person name="Halpern A.L."/>
            <person name="Mobarry C.M."/>
            <person name="Lippert R."/>
            <person name="Walenz B."/>
            <person name="Shatkay H."/>
            <person name="Dew I."/>
            <person name="Miller J.R."/>
            <person name="Flanigan M.J."/>
            <person name="Edwards N.J."/>
            <person name="Bolanos R."/>
            <person name="Fasulo D."/>
            <person name="Halldorsson B.V."/>
            <person name="Hannenhalli S."/>
            <person name="Turner R."/>
            <person name="Yooseph S."/>
            <person name="Lu F."/>
            <person name="Nusskern D.R."/>
            <person name="Shue B.C."/>
            <person name="Zheng X.H."/>
            <person name="Zhong F."/>
            <person name="Delcher A.L."/>
            <person name="Huson D.H."/>
            <person name="Kravitz S.A."/>
            <person name="Mouchard L."/>
            <person name="Reinert K."/>
            <person name="Remington K.A."/>
            <person name="Clark A.G."/>
            <person name="Waterman M.S."/>
            <person name="Eichler E.E."/>
            <person name="Adams M.D."/>
            <person name="Hunkapiller M.W."/>
            <person name="Myers E.W."/>
            <person name="Venter J.C."/>
        </authorList>
    </citation>
    <scope>NUCLEOTIDE SEQUENCE [LARGE SCALE GENOMIC DNA]</scope>
</reference>
<reference key="10">
    <citation type="journal article" date="2004" name="Genome Res.">
        <title>The status, quality, and expansion of the NIH full-length cDNA project: the Mammalian Gene Collection (MGC).</title>
        <authorList>
            <consortium name="The MGC Project Team"/>
        </authorList>
    </citation>
    <scope>NUCLEOTIDE SEQUENCE [LARGE SCALE MRNA] (ISOFORMS 1 AND 2)</scope>
</reference>
<reference key="11">
    <citation type="journal article" date="1998" name="Eur. J. Immunol.">
        <title>Identification of the CC chemokines TARC and macrophage inflammatory protein-1 beta as novel functional ligands for the CCR8 receptor.</title>
        <authorList>
            <person name="Bernardini G."/>
            <person name="Hedrick J."/>
            <person name="Sozzani S."/>
            <person name="Luini W."/>
            <person name="Spinetti G."/>
            <person name="Weiss M."/>
            <person name="Menon S."/>
            <person name="Zlotnik A."/>
            <person name="Mantovani A."/>
            <person name="Santoni A."/>
            <person name="Napolitano M."/>
        </authorList>
    </citation>
    <scope>FUNCTION</scope>
</reference>
<reference key="12">
    <citation type="journal article" date="1998" name="J. Immunol.">
        <title>Identification of CCR8 as the specific receptor for the human beta-chemokine I-309: cloning and molecular characterization of murine CCR8 as the receptor for TCA-3.</title>
        <authorList>
            <person name="Goya I."/>
            <person name="Gutierrez J."/>
            <person name="Varona R."/>
            <person name="Kremer L."/>
            <person name="Zaballos A."/>
            <person name="Marquez G."/>
        </authorList>
    </citation>
    <scope>FUNCTION AS A RECEPTOR FOR CCL1</scope>
</reference>
<reference key="13">
    <citation type="journal article" date="1999" name="Eur. J. Immunol.">
        <title>The assignment of chemokine-chemokine receptor pairs: TARC and MIP-1 beta are not ligands for human CC-chemokine receptor 8.</title>
        <authorList>
            <person name="Garlisi C.G."/>
            <person name="Xiao H."/>
            <person name="Tian F."/>
            <person name="Hedrick J.A."/>
            <person name="Billah M.M."/>
            <person name="Egan R.W."/>
            <person name="Umland S.P."/>
        </authorList>
    </citation>
    <scope>FUNCTION</scope>
</reference>
<dbReference type="EMBL" id="Z79782">
    <property type="protein sequence ID" value="CAB02142.1"/>
    <property type="molecule type" value="Genomic_DNA"/>
</dbReference>
<dbReference type="EMBL" id="Y08456">
    <property type="protein sequence ID" value="CAA69712.1"/>
    <property type="molecule type" value="Genomic_DNA"/>
</dbReference>
<dbReference type="EMBL" id="U45983">
    <property type="protein sequence ID" value="AAB61962.1"/>
    <property type="molecule type" value="Genomic_DNA"/>
</dbReference>
<dbReference type="EMBL" id="AF005210">
    <property type="protein sequence ID" value="AAB62547.1"/>
    <property type="molecule type" value="mRNA"/>
</dbReference>
<dbReference type="EMBL" id="U62556">
    <property type="protein sequence ID" value="AAB05542.1"/>
    <property type="molecule type" value="Genomic_DNA"/>
</dbReference>
<dbReference type="EMBL" id="D49919">
    <property type="protein sequence ID" value="BAA23387.1"/>
    <property type="molecule type" value="mRNA"/>
</dbReference>
<dbReference type="EMBL" id="AY016370">
    <property type="protein sequence ID" value="AAK08628.1"/>
    <property type="molecule type" value="Genomic_DNA"/>
</dbReference>
<dbReference type="EMBL" id="AK314957">
    <property type="protein sequence ID" value="BAG37461.1"/>
    <property type="molecule type" value="mRNA"/>
</dbReference>
<dbReference type="EMBL" id="AC104850">
    <property type="status" value="NOT_ANNOTATED_CDS"/>
    <property type="molecule type" value="Genomic_DNA"/>
</dbReference>
<dbReference type="EMBL" id="CH471055">
    <property type="protein sequence ID" value="EAW64577.1"/>
    <property type="molecule type" value="Genomic_DNA"/>
</dbReference>
<dbReference type="EMBL" id="BC069067">
    <property type="protein sequence ID" value="AAH69067.1"/>
    <property type="molecule type" value="mRNA"/>
</dbReference>
<dbReference type="EMBL" id="BC074743">
    <property type="protein sequence ID" value="AAH74743.1"/>
    <property type="molecule type" value="mRNA"/>
</dbReference>
<dbReference type="EMBL" id="BC107152">
    <property type="protein sequence ID" value="AAI07153.1"/>
    <property type="molecule type" value="mRNA"/>
</dbReference>
<dbReference type="EMBL" id="BC107159">
    <property type="protein sequence ID" value="AAI07160.1"/>
    <property type="molecule type" value="mRNA"/>
</dbReference>
<dbReference type="CCDS" id="CCDS2684.1">
    <molecule id="P51685-1"/>
</dbReference>
<dbReference type="PIR" id="JC5067">
    <property type="entry name" value="JC5067"/>
</dbReference>
<dbReference type="RefSeq" id="NP_005192.1">
    <molecule id="P51685-1"/>
    <property type="nucleotide sequence ID" value="NM_005201.4"/>
</dbReference>
<dbReference type="PDB" id="8KFX">
    <property type="method" value="EM"/>
    <property type="resolution" value="2.96 A"/>
    <property type="chains" value="R=1-355"/>
</dbReference>
<dbReference type="PDB" id="8KFY">
    <property type="method" value="EM"/>
    <property type="resolution" value="3.06 A"/>
    <property type="chains" value="R=1-355"/>
</dbReference>
<dbReference type="PDB" id="8KFZ">
    <property type="method" value="EM"/>
    <property type="resolution" value="3.30 A"/>
    <property type="chains" value="R=1-355"/>
</dbReference>
<dbReference type="PDB" id="8TLM">
    <property type="method" value="EM"/>
    <property type="resolution" value="2.90 A"/>
    <property type="chains" value="C=1-355"/>
</dbReference>
<dbReference type="PDB" id="8U1U">
    <property type="method" value="EM"/>
    <property type="resolution" value="3.10 A"/>
    <property type="chains" value="A=2-355"/>
</dbReference>
<dbReference type="PDB" id="8XML">
    <property type="method" value="EM"/>
    <property type="resolution" value="2.58 A"/>
    <property type="chains" value="R=1-355"/>
</dbReference>
<dbReference type="PDBsum" id="8KFX"/>
<dbReference type="PDBsum" id="8KFY"/>
<dbReference type="PDBsum" id="8KFZ"/>
<dbReference type="PDBsum" id="8TLM"/>
<dbReference type="PDBsum" id="8U1U"/>
<dbReference type="PDBsum" id="8XML"/>
<dbReference type="EMDB" id="EMD-37207"/>
<dbReference type="EMDB" id="EMD-37208"/>
<dbReference type="EMDB" id="EMD-37209"/>
<dbReference type="EMDB" id="EMD-38481"/>
<dbReference type="SMR" id="P51685"/>
<dbReference type="BioGRID" id="107642">
    <property type="interactions" value="14"/>
</dbReference>
<dbReference type="DIP" id="DIP-5836N"/>
<dbReference type="FunCoup" id="P51685">
    <property type="interactions" value="805"/>
</dbReference>
<dbReference type="IntAct" id="P51685">
    <property type="interactions" value="13"/>
</dbReference>
<dbReference type="MINT" id="P51685"/>
<dbReference type="STRING" id="9606.ENSP00000326432"/>
<dbReference type="BindingDB" id="P51685"/>
<dbReference type="ChEMBL" id="CHEMBL4596"/>
<dbReference type="DrugCentral" id="P51685"/>
<dbReference type="GuidetoPHARMACOLOGY" id="65"/>
<dbReference type="iPTMnet" id="P51685"/>
<dbReference type="PhosphoSitePlus" id="P51685"/>
<dbReference type="BioMuta" id="CCR8"/>
<dbReference type="DMDM" id="1707884"/>
<dbReference type="MassIVE" id="P51685"/>
<dbReference type="PaxDb" id="9606-ENSP00000326432"/>
<dbReference type="PeptideAtlas" id="P51685"/>
<dbReference type="Antibodypedia" id="12174">
    <property type="antibodies" value="562 antibodies from 38 providers"/>
</dbReference>
<dbReference type="DNASU" id="1237"/>
<dbReference type="Ensembl" id="ENST00000326306.5">
    <molecule id="P51685-1"/>
    <property type="protein sequence ID" value="ENSP00000326432.4"/>
    <property type="gene ID" value="ENSG00000179934.7"/>
</dbReference>
<dbReference type="GeneID" id="1237"/>
<dbReference type="KEGG" id="hsa:1237"/>
<dbReference type="MANE-Select" id="ENST00000326306.5">
    <property type="protein sequence ID" value="ENSP00000326432.4"/>
    <property type="RefSeq nucleotide sequence ID" value="NM_005201.4"/>
    <property type="RefSeq protein sequence ID" value="NP_005192.1"/>
</dbReference>
<dbReference type="UCSC" id="uc010hhr.3">
    <molecule id="P51685-1"/>
    <property type="organism name" value="human"/>
</dbReference>
<dbReference type="AGR" id="HGNC:1609"/>
<dbReference type="CTD" id="1237"/>
<dbReference type="DisGeNET" id="1237"/>
<dbReference type="GeneCards" id="CCR8"/>
<dbReference type="HGNC" id="HGNC:1609">
    <property type="gene designation" value="CCR8"/>
</dbReference>
<dbReference type="HPA" id="ENSG00000179934">
    <property type="expression patterns" value="Tissue enriched (lymphoid)"/>
</dbReference>
<dbReference type="MIM" id="601834">
    <property type="type" value="gene"/>
</dbReference>
<dbReference type="neXtProt" id="NX_P51685"/>
<dbReference type="OpenTargets" id="ENSG00000179934"/>
<dbReference type="PharmGKB" id="PA26173"/>
<dbReference type="VEuPathDB" id="HostDB:ENSG00000179934"/>
<dbReference type="eggNOG" id="KOG3656">
    <property type="taxonomic scope" value="Eukaryota"/>
</dbReference>
<dbReference type="GeneTree" id="ENSGT01020000230359"/>
<dbReference type="HOGENOM" id="CLU_009579_8_3_1"/>
<dbReference type="InParanoid" id="P51685"/>
<dbReference type="OMA" id="QLDQWVF"/>
<dbReference type="OrthoDB" id="8951197at2759"/>
<dbReference type="PAN-GO" id="P51685">
    <property type="GO annotations" value="7 GO annotations based on evolutionary models"/>
</dbReference>
<dbReference type="PhylomeDB" id="P51685"/>
<dbReference type="TreeFam" id="TF330966"/>
<dbReference type="PathwayCommons" id="P51685"/>
<dbReference type="Reactome" id="R-HSA-380108">
    <property type="pathway name" value="Chemokine receptors bind chemokines"/>
</dbReference>
<dbReference type="Reactome" id="R-HSA-418594">
    <property type="pathway name" value="G alpha (i) signalling events"/>
</dbReference>
<dbReference type="SignaLink" id="P51685"/>
<dbReference type="SIGNOR" id="P51685"/>
<dbReference type="BioGRID-ORCS" id="1237">
    <property type="hits" value="10 hits in 1141 CRISPR screens"/>
</dbReference>
<dbReference type="GeneWiki" id="CCR8_(gene)"/>
<dbReference type="GenomeRNAi" id="1237"/>
<dbReference type="Pharos" id="P51685">
    <property type="development level" value="Tchem"/>
</dbReference>
<dbReference type="PRO" id="PR:P51685"/>
<dbReference type="Proteomes" id="UP000005640">
    <property type="component" value="Chromosome 3"/>
</dbReference>
<dbReference type="RNAct" id="P51685">
    <property type="molecule type" value="protein"/>
</dbReference>
<dbReference type="Bgee" id="ENSG00000179934">
    <property type="expression patterns" value="Expressed in primordial germ cell in gonad and 32 other cell types or tissues"/>
</dbReference>
<dbReference type="ExpressionAtlas" id="P51685">
    <property type="expression patterns" value="baseline and differential"/>
</dbReference>
<dbReference type="GO" id="GO:0009897">
    <property type="term" value="C:external side of plasma membrane"/>
    <property type="evidence" value="ECO:0000318"/>
    <property type="project" value="GO_Central"/>
</dbReference>
<dbReference type="GO" id="GO:0005886">
    <property type="term" value="C:plasma membrane"/>
    <property type="evidence" value="ECO:0000304"/>
    <property type="project" value="Reactome"/>
</dbReference>
<dbReference type="GO" id="GO:0019957">
    <property type="term" value="F:C-C chemokine binding"/>
    <property type="evidence" value="ECO:0000318"/>
    <property type="project" value="GO_Central"/>
</dbReference>
<dbReference type="GO" id="GO:0016493">
    <property type="term" value="F:C-C chemokine receptor activity"/>
    <property type="evidence" value="ECO:0000318"/>
    <property type="project" value="GO_Central"/>
</dbReference>
<dbReference type="GO" id="GO:0004950">
    <property type="term" value="F:chemokine receptor activity"/>
    <property type="evidence" value="ECO:0000304"/>
    <property type="project" value="ProtInc"/>
</dbReference>
<dbReference type="GO" id="GO:0015026">
    <property type="term" value="F:coreceptor activity"/>
    <property type="evidence" value="ECO:0000304"/>
    <property type="project" value="ProtInc"/>
</dbReference>
<dbReference type="GO" id="GO:0019722">
    <property type="term" value="P:calcium-mediated signaling"/>
    <property type="evidence" value="ECO:0000318"/>
    <property type="project" value="GO_Central"/>
</dbReference>
<dbReference type="GO" id="GO:0007155">
    <property type="term" value="P:cell adhesion"/>
    <property type="evidence" value="ECO:0000304"/>
    <property type="project" value="ProtInc"/>
</dbReference>
<dbReference type="GO" id="GO:0060326">
    <property type="term" value="P:cell chemotaxis"/>
    <property type="evidence" value="ECO:0000318"/>
    <property type="project" value="GO_Central"/>
</dbReference>
<dbReference type="GO" id="GO:0006935">
    <property type="term" value="P:chemotaxis"/>
    <property type="evidence" value="ECO:0000304"/>
    <property type="project" value="ProtInc"/>
</dbReference>
<dbReference type="GO" id="GO:0007186">
    <property type="term" value="P:G protein-coupled receptor signaling pathway"/>
    <property type="evidence" value="ECO:0000304"/>
    <property type="project" value="ProtInc"/>
</dbReference>
<dbReference type="GO" id="GO:0006955">
    <property type="term" value="P:immune response"/>
    <property type="evidence" value="ECO:0000318"/>
    <property type="project" value="GO_Central"/>
</dbReference>
<dbReference type="GO" id="GO:0007204">
    <property type="term" value="P:positive regulation of cytosolic calcium ion concentration"/>
    <property type="evidence" value="ECO:0000318"/>
    <property type="project" value="GO_Central"/>
</dbReference>
<dbReference type="CDD" id="cd15187">
    <property type="entry name" value="7tmA_CCR8"/>
    <property type="match status" value="1"/>
</dbReference>
<dbReference type="FunFam" id="1.20.1070.10:FF:000026">
    <property type="entry name" value="C-C chemokine receptor type 5"/>
    <property type="match status" value="1"/>
</dbReference>
<dbReference type="Gene3D" id="1.20.1070.10">
    <property type="entry name" value="Rhodopsin 7-helix transmembrane proteins"/>
    <property type="match status" value="1"/>
</dbReference>
<dbReference type="InterPro" id="IPR050119">
    <property type="entry name" value="CCR1-9-like"/>
</dbReference>
<dbReference type="InterPro" id="IPR004068">
    <property type="entry name" value="Chemokine_CCR8"/>
</dbReference>
<dbReference type="InterPro" id="IPR000355">
    <property type="entry name" value="Chemokine_rcpt"/>
</dbReference>
<dbReference type="InterPro" id="IPR000276">
    <property type="entry name" value="GPCR_Rhodpsn"/>
</dbReference>
<dbReference type="InterPro" id="IPR017452">
    <property type="entry name" value="GPCR_Rhodpsn_7TM"/>
</dbReference>
<dbReference type="PANTHER" id="PTHR10489:SF627">
    <property type="entry name" value="C-C CHEMOKINE RECEPTOR TYPE 8"/>
    <property type="match status" value="1"/>
</dbReference>
<dbReference type="PANTHER" id="PTHR10489">
    <property type="entry name" value="CELL ADHESION MOLECULE"/>
    <property type="match status" value="1"/>
</dbReference>
<dbReference type="Pfam" id="PF00001">
    <property type="entry name" value="7tm_1"/>
    <property type="match status" value="1"/>
</dbReference>
<dbReference type="PRINTS" id="PR00657">
    <property type="entry name" value="CCCHEMOKINER"/>
</dbReference>
<dbReference type="PRINTS" id="PR01530">
    <property type="entry name" value="CHEMOKINER8"/>
</dbReference>
<dbReference type="PRINTS" id="PR00237">
    <property type="entry name" value="GPCRRHODOPSN"/>
</dbReference>
<dbReference type="SUPFAM" id="SSF81321">
    <property type="entry name" value="Family A G protein-coupled receptor-like"/>
    <property type="match status" value="1"/>
</dbReference>
<dbReference type="PROSITE" id="PS00237">
    <property type="entry name" value="G_PROTEIN_RECEP_F1_1"/>
    <property type="match status" value="1"/>
</dbReference>
<dbReference type="PROSITE" id="PS50262">
    <property type="entry name" value="G_PROTEIN_RECEP_F1_2"/>
    <property type="match status" value="1"/>
</dbReference>
<gene>
    <name type="primary">CCR8</name>
    <name type="synonym">CKRL1</name>
    <name type="synonym">CMKBR8</name>
    <name type="synonym">CMKBRL2</name>
</gene>
<comment type="function">
    <text evidence="3 5 6 7">Receptor for the chemokine CCL1/SCYA1/I-309. May regulate monocyte chemotaxis and thymic cell line apoptosis. Alternative coreceptor with CD4 for HIV-1 infection.</text>
</comment>
<comment type="subcellular location">
    <subcellularLocation>
        <location>Cell membrane</location>
        <topology>Multi-pass membrane protein</topology>
    </subcellularLocation>
</comment>
<comment type="alternative products">
    <event type="alternative splicing"/>
    <isoform>
        <id>P51685-1</id>
        <name>1</name>
        <sequence type="displayed"/>
    </isoform>
    <isoform>
        <id>P51685-2</id>
        <name>2</name>
        <sequence type="described" ref="VSP_056340"/>
    </isoform>
</comment>
<comment type="similarity">
    <text evidence="2">Belongs to the G-protein coupled receptor 1 family.</text>
</comment>
<comment type="caution">
    <text evidence="9">Was originally thought to be a receptor for SCYA3 and SCYA17.</text>
</comment>
<comment type="online information" name="Wikipedia">
    <link uri="https://en.wikipedia.org/wiki/CC_chemokine_receptors"/>
    <text>CC chemokine receptors entry</text>
</comment>
<sequence length="355" mass="40844">MDYTLDLSVTTVTDYYYPDIFSSPCDAELIQTNGKLLLAVFYCLLFVFSLLGNSLVILVLVVCKKLRSITDVYLLNLALSDLLFVFSFPFQTYYLLDQWVFGTVMCKVVSGFYYIGFYSSMFFITLMSVDRYLAVVHAVYALKVRTIRMGTTLCLAVWLTAIMATIPLLVFYQVASEDGVLQCYSFYNQQTLKWKIFTNFKMNILGLLIPFTIFMFCYIKILHQLKRCQNHNKTKAIRLVLIVVIASLLFWVPFNVVLFLTSLHSMHILDGCSISQQLTYATHVTEIISFTHCCVNPVIYAFVGEKFKKHLSEIFQKSCSQIFNYLGRQMPRESCEKSSSCQQHSSRSSSVDYIL</sequence>
<feature type="chain" id="PRO_0000069288" description="C-C chemokine receptor type 8">
    <location>
        <begin position="1"/>
        <end position="355"/>
    </location>
</feature>
<feature type="topological domain" description="Extracellular" evidence="1">
    <location>
        <begin position="1"/>
        <end position="35"/>
    </location>
</feature>
<feature type="transmembrane region" description="Helical; Name=1" evidence="1">
    <location>
        <begin position="36"/>
        <end position="63"/>
    </location>
</feature>
<feature type="topological domain" description="Cytoplasmic" evidence="1">
    <location>
        <begin position="64"/>
        <end position="73"/>
    </location>
</feature>
<feature type="transmembrane region" description="Helical; Name=2" evidence="1">
    <location>
        <begin position="74"/>
        <end position="93"/>
    </location>
</feature>
<feature type="topological domain" description="Extracellular" evidence="1">
    <location>
        <begin position="94"/>
        <end position="107"/>
    </location>
</feature>
<feature type="transmembrane region" description="Helical; Name=3" evidence="1">
    <location>
        <begin position="108"/>
        <end position="129"/>
    </location>
</feature>
<feature type="topological domain" description="Cytoplasmic" evidence="1">
    <location>
        <begin position="130"/>
        <end position="146"/>
    </location>
</feature>
<feature type="transmembrane region" description="Helical; Name=4" evidence="1">
    <location>
        <begin position="147"/>
        <end position="171"/>
    </location>
</feature>
<feature type="topological domain" description="Extracellular" evidence="1">
    <location>
        <begin position="172"/>
        <end position="202"/>
    </location>
</feature>
<feature type="transmembrane region" description="Helical; Name=5" evidence="1">
    <location>
        <begin position="203"/>
        <end position="222"/>
    </location>
</feature>
<feature type="topological domain" description="Cytoplasmic" evidence="1">
    <location>
        <begin position="223"/>
        <end position="238"/>
    </location>
</feature>
<feature type="transmembrane region" description="Helical; Name=6" evidence="1">
    <location>
        <begin position="239"/>
        <end position="263"/>
    </location>
</feature>
<feature type="topological domain" description="Extracellular" evidence="1">
    <location>
        <begin position="264"/>
        <end position="280"/>
    </location>
</feature>
<feature type="transmembrane region" description="Helical; Name=7" evidence="1">
    <location>
        <begin position="281"/>
        <end position="304"/>
    </location>
</feature>
<feature type="topological domain" description="Cytoplasmic" evidence="1">
    <location>
        <begin position="305"/>
        <end position="355"/>
    </location>
</feature>
<feature type="disulfide bond" evidence="2">
    <location>
        <begin position="106"/>
        <end position="183"/>
    </location>
</feature>
<feature type="splice variant" id="VSP_056340" description="In isoform 2." evidence="8">
    <original>MDYTLDLSVTTVTDYYYPDIFSSPCDAELIQTNGKLLLAVFYCLLFVFSLLGNSLVILVLVVCKKLRSITDVYLLNLALSDLLFVFSFPFQ</original>
    <variation>MRNLFRQM</variation>
    <location>
        <begin position="1"/>
        <end position="91"/>
    </location>
</feature>
<feature type="sequence variant" id="VAR_049384" description="In dbSNP:rs2853699." evidence="4">
    <original>A</original>
    <variation>G</variation>
    <location>
        <position position="27"/>
    </location>
</feature>
<feature type="strand" evidence="12">
    <location>
        <begin position="25"/>
        <end position="27"/>
    </location>
</feature>
<feature type="helix" evidence="11">
    <location>
        <begin position="34"/>
        <end position="62"/>
    </location>
</feature>
<feature type="helix" evidence="11">
    <location>
        <begin position="69"/>
        <end position="95"/>
    </location>
</feature>
<feature type="helix" evidence="11">
    <location>
        <begin position="102"/>
        <end position="136"/>
    </location>
</feature>
<feature type="helix" evidence="11">
    <location>
        <begin position="138"/>
        <end position="144"/>
    </location>
</feature>
<feature type="helix" evidence="11">
    <location>
        <begin position="147"/>
        <end position="169"/>
    </location>
</feature>
<feature type="strand" evidence="11">
    <location>
        <begin position="172"/>
        <end position="179"/>
    </location>
</feature>
<feature type="strand" evidence="11">
    <location>
        <begin position="181"/>
        <end position="185"/>
    </location>
</feature>
<feature type="turn" evidence="11">
    <location>
        <begin position="189"/>
        <end position="191"/>
    </location>
</feature>
<feature type="helix" evidence="11">
    <location>
        <begin position="192"/>
        <end position="206"/>
    </location>
</feature>
<feature type="helix" evidence="11">
    <location>
        <begin position="208"/>
        <end position="225"/>
    </location>
</feature>
<feature type="strand" evidence="10">
    <location>
        <begin position="230"/>
        <end position="232"/>
    </location>
</feature>
<feature type="helix" evidence="11">
    <location>
        <begin position="238"/>
        <end position="264"/>
    </location>
</feature>
<feature type="helix" evidence="11">
    <location>
        <begin position="274"/>
        <end position="303"/>
    </location>
</feature>
<feature type="helix" evidence="11">
    <location>
        <begin position="305"/>
        <end position="311"/>
    </location>
</feature>
<accession>P51685</accession>
<accession>B2RC64</accession>
<accession>Q3KNQ8</accession>
<accession>Q3KNR3</accession>
<accession>Q9BYX5</accession>
<proteinExistence type="evidence at protein level"/>
<protein>
    <recommendedName>
        <fullName>C-C chemokine receptor type 8</fullName>
        <shortName>C-C CKR-8</shortName>
        <shortName>CC-CKR-8</shortName>
        <shortName>CCR-8</shortName>
    </recommendedName>
    <alternativeName>
        <fullName>CC chemokine receptor CHEMR1</fullName>
    </alternativeName>
    <alternativeName>
        <fullName>CMKBRL2</fullName>
    </alternativeName>
    <alternativeName>
        <fullName>Chemokine receptor-like 1</fullName>
        <shortName>CKR-L1</shortName>
    </alternativeName>
    <alternativeName>
        <fullName>GPR-CY6</fullName>
        <shortName>GPRCY6</shortName>
    </alternativeName>
    <alternativeName>
        <fullName>TER1</fullName>
    </alternativeName>
    <cdAntigenName>CDw198</cdAntigenName>
</protein>
<organism>
    <name type="scientific">Homo sapiens</name>
    <name type="common">Human</name>
    <dbReference type="NCBI Taxonomy" id="9606"/>
    <lineage>
        <taxon>Eukaryota</taxon>
        <taxon>Metazoa</taxon>
        <taxon>Chordata</taxon>
        <taxon>Craniata</taxon>
        <taxon>Vertebrata</taxon>
        <taxon>Euteleostomi</taxon>
        <taxon>Mammalia</taxon>
        <taxon>Eutheria</taxon>
        <taxon>Euarchontoglires</taxon>
        <taxon>Primates</taxon>
        <taxon>Haplorrhini</taxon>
        <taxon>Catarrhini</taxon>
        <taxon>Hominidae</taxon>
        <taxon>Homo</taxon>
    </lineage>
</organism>
<keyword id="KW-0002">3D-structure</keyword>
<keyword id="KW-0025">Alternative splicing</keyword>
<keyword id="KW-1003">Cell membrane</keyword>
<keyword id="KW-1015">Disulfide bond</keyword>
<keyword id="KW-0297">G-protein coupled receptor</keyword>
<keyword id="KW-0472">Membrane</keyword>
<keyword id="KW-1267">Proteomics identification</keyword>
<keyword id="KW-0675">Receptor</keyword>
<keyword id="KW-1185">Reference proteome</keyword>
<keyword id="KW-0807">Transducer</keyword>
<keyword id="KW-0812">Transmembrane</keyword>
<keyword id="KW-1133">Transmembrane helix</keyword>
<name>CCR8_HUMAN</name>